<name>G6PI_BARBK</name>
<accession>A1URM5</accession>
<protein>
    <recommendedName>
        <fullName evidence="1">Glucose-6-phosphate isomerase</fullName>
        <shortName evidence="1">GPI</shortName>
        <ecNumber evidence="1">5.3.1.9</ecNumber>
    </recommendedName>
    <alternativeName>
        <fullName evidence="1">Phosphoglucose isomerase</fullName>
        <shortName evidence="1">PGI</shortName>
    </alternativeName>
    <alternativeName>
        <fullName evidence="1">Phosphohexose isomerase</fullName>
        <shortName evidence="1">PHI</shortName>
    </alternativeName>
</protein>
<sequence length="549" mass="61744">MLPDKKAFKESLKALKKHVTQDKVCDIRQHFSEDEQRFARLSIRLDDLLFDFSKCGVTLDTLQLLDNLAIAADVLGKREAMFSGKIINTTEKRSVLHIALRLAADKVFILNDRDIVQDIQSVLARMVKFSKMIRDGSYKGYSGERITDIVNIGIGGSDLGPAMVTSALKPYHDGPHCHFVSSVDSAHITDILADLNPATTLFIIASKTFTTTETIENARVARQWIHSHLGENAVGVHFVAVSSAIDKAIEFGIDSSRIFEFWDWVGGRYSIWSAIGLVVMLAIGDQNFRQFLEGARQMDQHFKDTPLHQNIPIRFALLGFWHRVICGYSSRAIVPYEQRLVRFPAYLQQLDMESNGKHVSLEGRPITFSTGPVVWGDSGSNGQHAFFQFLHQGTDIVPVEFILFVKGHEPNLNHMHDILVANCLAQSEALMKGRSHEDVYHTLMNDGGESDEADNLAFHKSLQGNRPSIMLIQDLLTPFTLGRLMALYEHRIFVEGILMNINSFDQWGVELGKEFANELLPVIRGENEADNRDGSTLGLLKHIQNRYVE</sequence>
<keyword id="KW-0963">Cytoplasm</keyword>
<keyword id="KW-0312">Gluconeogenesis</keyword>
<keyword id="KW-0324">Glycolysis</keyword>
<keyword id="KW-0413">Isomerase</keyword>
<proteinExistence type="inferred from homology"/>
<organism>
    <name type="scientific">Bartonella bacilliformis (strain ATCC 35685 / KC583 / Herrer 020/F12,63)</name>
    <dbReference type="NCBI Taxonomy" id="360095"/>
    <lineage>
        <taxon>Bacteria</taxon>
        <taxon>Pseudomonadati</taxon>
        <taxon>Pseudomonadota</taxon>
        <taxon>Alphaproteobacteria</taxon>
        <taxon>Hyphomicrobiales</taxon>
        <taxon>Bartonellaceae</taxon>
        <taxon>Bartonella</taxon>
    </lineage>
</organism>
<comment type="function">
    <text evidence="1">Catalyzes the reversible isomerization of glucose-6-phosphate to fructose-6-phosphate.</text>
</comment>
<comment type="catalytic activity">
    <reaction evidence="1">
        <text>alpha-D-glucose 6-phosphate = beta-D-fructose 6-phosphate</text>
        <dbReference type="Rhea" id="RHEA:11816"/>
        <dbReference type="ChEBI" id="CHEBI:57634"/>
        <dbReference type="ChEBI" id="CHEBI:58225"/>
        <dbReference type="EC" id="5.3.1.9"/>
    </reaction>
</comment>
<comment type="pathway">
    <text evidence="1">Carbohydrate biosynthesis; gluconeogenesis.</text>
</comment>
<comment type="pathway">
    <text evidence="1">Carbohydrate degradation; glycolysis; D-glyceraldehyde 3-phosphate and glycerone phosphate from D-glucose: step 2/4.</text>
</comment>
<comment type="subcellular location">
    <subcellularLocation>
        <location evidence="1">Cytoplasm</location>
    </subcellularLocation>
</comment>
<comment type="similarity">
    <text evidence="1">Belongs to the GPI family.</text>
</comment>
<dbReference type="EC" id="5.3.1.9" evidence="1"/>
<dbReference type="EMBL" id="CP000524">
    <property type="protein sequence ID" value="ABM45455.1"/>
    <property type="molecule type" value="Genomic_DNA"/>
</dbReference>
<dbReference type="RefSeq" id="WP_005766211.1">
    <property type="nucleotide sequence ID" value="NC_008783.1"/>
</dbReference>
<dbReference type="SMR" id="A1URM5"/>
<dbReference type="STRING" id="360095.BARBAKC583_0307"/>
<dbReference type="GeneID" id="4683884"/>
<dbReference type="KEGG" id="bbk:BARBAKC583_0307"/>
<dbReference type="PATRIC" id="fig|360095.6.peg.292"/>
<dbReference type="eggNOG" id="COG0166">
    <property type="taxonomic scope" value="Bacteria"/>
</dbReference>
<dbReference type="HOGENOM" id="CLU_017947_3_1_5"/>
<dbReference type="OrthoDB" id="140919at2"/>
<dbReference type="UniPathway" id="UPA00109">
    <property type="reaction ID" value="UER00181"/>
</dbReference>
<dbReference type="UniPathway" id="UPA00138"/>
<dbReference type="Proteomes" id="UP000000643">
    <property type="component" value="Chromosome"/>
</dbReference>
<dbReference type="GO" id="GO:0005829">
    <property type="term" value="C:cytosol"/>
    <property type="evidence" value="ECO:0007669"/>
    <property type="project" value="TreeGrafter"/>
</dbReference>
<dbReference type="GO" id="GO:0097367">
    <property type="term" value="F:carbohydrate derivative binding"/>
    <property type="evidence" value="ECO:0007669"/>
    <property type="project" value="InterPro"/>
</dbReference>
<dbReference type="GO" id="GO:0004347">
    <property type="term" value="F:glucose-6-phosphate isomerase activity"/>
    <property type="evidence" value="ECO:0007669"/>
    <property type="project" value="UniProtKB-UniRule"/>
</dbReference>
<dbReference type="GO" id="GO:0048029">
    <property type="term" value="F:monosaccharide binding"/>
    <property type="evidence" value="ECO:0007669"/>
    <property type="project" value="TreeGrafter"/>
</dbReference>
<dbReference type="GO" id="GO:0006094">
    <property type="term" value="P:gluconeogenesis"/>
    <property type="evidence" value="ECO:0007669"/>
    <property type="project" value="UniProtKB-UniRule"/>
</dbReference>
<dbReference type="GO" id="GO:0051156">
    <property type="term" value="P:glucose 6-phosphate metabolic process"/>
    <property type="evidence" value="ECO:0007669"/>
    <property type="project" value="TreeGrafter"/>
</dbReference>
<dbReference type="GO" id="GO:0006096">
    <property type="term" value="P:glycolytic process"/>
    <property type="evidence" value="ECO:0007669"/>
    <property type="project" value="UniProtKB-UniRule"/>
</dbReference>
<dbReference type="CDD" id="cd05015">
    <property type="entry name" value="SIS_PGI_1"/>
    <property type="match status" value="1"/>
</dbReference>
<dbReference type="CDD" id="cd05016">
    <property type="entry name" value="SIS_PGI_2"/>
    <property type="match status" value="1"/>
</dbReference>
<dbReference type="Gene3D" id="1.10.1390.10">
    <property type="match status" value="1"/>
</dbReference>
<dbReference type="Gene3D" id="3.40.50.10490">
    <property type="entry name" value="Glucose-6-phosphate isomerase like protein, domain 1"/>
    <property type="match status" value="2"/>
</dbReference>
<dbReference type="HAMAP" id="MF_00473">
    <property type="entry name" value="G6P_isomerase"/>
    <property type="match status" value="1"/>
</dbReference>
<dbReference type="InterPro" id="IPR001672">
    <property type="entry name" value="G6P_Isomerase"/>
</dbReference>
<dbReference type="InterPro" id="IPR023096">
    <property type="entry name" value="G6P_Isomerase_C"/>
</dbReference>
<dbReference type="InterPro" id="IPR018189">
    <property type="entry name" value="Phosphoglucose_isomerase_CS"/>
</dbReference>
<dbReference type="InterPro" id="IPR046348">
    <property type="entry name" value="SIS_dom_sf"/>
</dbReference>
<dbReference type="InterPro" id="IPR035476">
    <property type="entry name" value="SIS_PGI_1"/>
</dbReference>
<dbReference type="InterPro" id="IPR035482">
    <property type="entry name" value="SIS_PGI_2"/>
</dbReference>
<dbReference type="NCBIfam" id="NF001211">
    <property type="entry name" value="PRK00179.1"/>
    <property type="match status" value="1"/>
</dbReference>
<dbReference type="PANTHER" id="PTHR11469">
    <property type="entry name" value="GLUCOSE-6-PHOSPHATE ISOMERASE"/>
    <property type="match status" value="1"/>
</dbReference>
<dbReference type="PANTHER" id="PTHR11469:SF1">
    <property type="entry name" value="GLUCOSE-6-PHOSPHATE ISOMERASE"/>
    <property type="match status" value="1"/>
</dbReference>
<dbReference type="Pfam" id="PF00342">
    <property type="entry name" value="PGI"/>
    <property type="match status" value="1"/>
</dbReference>
<dbReference type="PRINTS" id="PR00662">
    <property type="entry name" value="G6PISOMERASE"/>
</dbReference>
<dbReference type="SUPFAM" id="SSF53697">
    <property type="entry name" value="SIS domain"/>
    <property type="match status" value="1"/>
</dbReference>
<dbReference type="PROSITE" id="PS00765">
    <property type="entry name" value="P_GLUCOSE_ISOMERASE_1"/>
    <property type="match status" value="1"/>
</dbReference>
<dbReference type="PROSITE" id="PS00174">
    <property type="entry name" value="P_GLUCOSE_ISOMERASE_2"/>
    <property type="match status" value="1"/>
</dbReference>
<dbReference type="PROSITE" id="PS51463">
    <property type="entry name" value="P_GLUCOSE_ISOMERASE_3"/>
    <property type="match status" value="1"/>
</dbReference>
<gene>
    <name evidence="1" type="primary">pgi</name>
    <name type="ordered locus">BARBAKC583_0307</name>
</gene>
<evidence type="ECO:0000255" key="1">
    <source>
        <dbReference type="HAMAP-Rule" id="MF_00473"/>
    </source>
</evidence>
<reference key="1">
    <citation type="submission" date="2006-12" db="EMBL/GenBank/DDBJ databases">
        <authorList>
            <person name="Hendrix L."/>
            <person name="Mohamoud Y."/>
            <person name="Radune D."/>
            <person name="Shvartsbeyn A."/>
            <person name="Daugherty S."/>
            <person name="Dodson R."/>
            <person name="Durkin A.S."/>
            <person name="Harkins D."/>
            <person name="Huot H."/>
            <person name="Kothari S.P."/>
            <person name="Madupu R."/>
            <person name="Li J."/>
            <person name="Nelson W.C."/>
            <person name="Shrivastava S."/>
            <person name="Giglio M.G."/>
            <person name="Haft D."/>
            <person name="Selengut J."/>
            <person name="Fraser-Ligget C."/>
            <person name="Seshadri R."/>
        </authorList>
    </citation>
    <scope>NUCLEOTIDE SEQUENCE [LARGE SCALE GENOMIC DNA]</scope>
    <source>
        <strain>ATCC 35685 / KC583 / Herrer 020/F12,63</strain>
    </source>
</reference>
<feature type="chain" id="PRO_1000013942" description="Glucose-6-phosphate isomerase">
    <location>
        <begin position="1"/>
        <end position="549"/>
    </location>
</feature>
<feature type="active site" description="Proton donor" evidence="1">
    <location>
        <position position="353"/>
    </location>
</feature>
<feature type="active site" evidence="1">
    <location>
        <position position="384"/>
    </location>
</feature>
<feature type="active site" evidence="1">
    <location>
        <position position="513"/>
    </location>
</feature>